<gene>
    <name type="ordered locus">NGR_a00480</name>
    <name type="ORF">y4zD</name>
</gene>
<sequence>MHGGIQRISLRGSMLMPPQSNWQDNRFSSVAAQVDVPRAHIRGHARFSI</sequence>
<feature type="chain" id="PRO_0000200977" description="Uncharacterized protein y4zD">
    <location>
        <begin position="1"/>
        <end position="49"/>
    </location>
</feature>
<proteinExistence type="predicted"/>
<geneLocation type="plasmid">
    <name>sym pNGR234a</name>
</geneLocation>
<organism>
    <name type="scientific">Sinorhizobium fredii (strain NBRC 101917 / NGR234)</name>
    <dbReference type="NCBI Taxonomy" id="394"/>
    <lineage>
        <taxon>Bacteria</taxon>
        <taxon>Pseudomonadati</taxon>
        <taxon>Pseudomonadota</taxon>
        <taxon>Alphaproteobacteria</taxon>
        <taxon>Hyphomicrobiales</taxon>
        <taxon>Rhizobiaceae</taxon>
        <taxon>Sinorhizobium/Ensifer group</taxon>
        <taxon>Sinorhizobium</taxon>
    </lineage>
</organism>
<name>Y4ZD_SINFN</name>
<accession>P55731</accession>
<reference key="1">
    <citation type="journal article" date="1997" name="Nature">
        <title>Molecular basis of symbiosis between Rhizobium and legumes.</title>
        <authorList>
            <person name="Freiberg C.A."/>
            <person name="Fellay R."/>
            <person name="Bairoch A."/>
            <person name="Broughton W.J."/>
            <person name="Rosenthal A."/>
            <person name="Perret X."/>
        </authorList>
    </citation>
    <scope>NUCLEOTIDE SEQUENCE [LARGE SCALE GENOMIC DNA]</scope>
    <source>
        <strain>NBRC 101917 / NGR234</strain>
    </source>
</reference>
<reference key="2">
    <citation type="journal article" date="2009" name="Appl. Environ. Microbiol.">
        <title>Rhizobium sp. strain NGR234 possesses a remarkable number of secretion systems.</title>
        <authorList>
            <person name="Schmeisser C."/>
            <person name="Liesegang H."/>
            <person name="Krysciak D."/>
            <person name="Bakkou N."/>
            <person name="Le Quere A."/>
            <person name="Wollherr A."/>
            <person name="Heinemeyer I."/>
            <person name="Morgenstern B."/>
            <person name="Pommerening-Roeser A."/>
            <person name="Flores M."/>
            <person name="Palacios R."/>
            <person name="Brenner S."/>
            <person name="Gottschalk G."/>
            <person name="Schmitz R.A."/>
            <person name="Broughton W.J."/>
            <person name="Perret X."/>
            <person name="Strittmatter A.W."/>
            <person name="Streit W.R."/>
        </authorList>
    </citation>
    <scope>NUCLEOTIDE SEQUENCE [LARGE SCALE GENOMIC DNA]</scope>
    <source>
        <strain>NBRC 101917 / NGR234</strain>
    </source>
</reference>
<keyword id="KW-0614">Plasmid</keyword>
<keyword id="KW-1185">Reference proteome</keyword>
<dbReference type="EMBL" id="U00090">
    <property type="protein sequence ID" value="AAB91962.1"/>
    <property type="molecule type" value="Genomic_DNA"/>
</dbReference>
<dbReference type="RefSeq" id="NP_444175.1">
    <property type="nucleotide sequence ID" value="NC_000914.2"/>
</dbReference>
<dbReference type="KEGG" id="rhi:NGR_a00480"/>
<dbReference type="HOGENOM" id="CLU_3139985_0_0_5"/>
<dbReference type="Proteomes" id="UP000001054">
    <property type="component" value="Plasmid pNGR234a"/>
</dbReference>
<protein>
    <recommendedName>
        <fullName>Uncharacterized protein y4zD</fullName>
    </recommendedName>
</protein>